<gene>
    <name evidence="1" type="primary">cca</name>
    <name type="ordered locus">EcolC_0643</name>
</gene>
<dbReference type="EC" id="2.7.7.72" evidence="1"/>
<dbReference type="EC" id="3.1.3.-" evidence="1"/>
<dbReference type="EC" id="3.1.4.-" evidence="1"/>
<dbReference type="EMBL" id="CP000946">
    <property type="protein sequence ID" value="ACA76319.1"/>
    <property type="molecule type" value="Genomic_DNA"/>
</dbReference>
<dbReference type="RefSeq" id="WP_000708487.1">
    <property type="nucleotide sequence ID" value="NZ_MTFT01000027.1"/>
</dbReference>
<dbReference type="SMR" id="B1IRR0"/>
<dbReference type="KEGG" id="ecl:EcolC_0643"/>
<dbReference type="HOGENOM" id="CLU_015961_1_1_6"/>
<dbReference type="GO" id="GO:0005524">
    <property type="term" value="F:ATP binding"/>
    <property type="evidence" value="ECO:0007669"/>
    <property type="project" value="UniProtKB-UniRule"/>
</dbReference>
<dbReference type="GO" id="GO:0004810">
    <property type="term" value="F:CCA tRNA nucleotidyltransferase activity"/>
    <property type="evidence" value="ECO:0007669"/>
    <property type="project" value="UniProtKB-UniRule"/>
</dbReference>
<dbReference type="GO" id="GO:0004112">
    <property type="term" value="F:cyclic-nucleotide phosphodiesterase activity"/>
    <property type="evidence" value="ECO:0007669"/>
    <property type="project" value="UniProtKB-UniRule"/>
</dbReference>
<dbReference type="GO" id="GO:0000287">
    <property type="term" value="F:magnesium ion binding"/>
    <property type="evidence" value="ECO:0007669"/>
    <property type="project" value="UniProtKB-UniRule"/>
</dbReference>
<dbReference type="GO" id="GO:0016791">
    <property type="term" value="F:phosphatase activity"/>
    <property type="evidence" value="ECO:0007669"/>
    <property type="project" value="UniProtKB-UniRule"/>
</dbReference>
<dbReference type="GO" id="GO:0000049">
    <property type="term" value="F:tRNA binding"/>
    <property type="evidence" value="ECO:0007669"/>
    <property type="project" value="UniProtKB-UniRule"/>
</dbReference>
<dbReference type="GO" id="GO:0042245">
    <property type="term" value="P:RNA repair"/>
    <property type="evidence" value="ECO:0007669"/>
    <property type="project" value="UniProtKB-KW"/>
</dbReference>
<dbReference type="GO" id="GO:0001680">
    <property type="term" value="P:tRNA 3'-terminal CCA addition"/>
    <property type="evidence" value="ECO:0007669"/>
    <property type="project" value="UniProtKB-UniRule"/>
</dbReference>
<dbReference type="CDD" id="cd00077">
    <property type="entry name" value="HDc"/>
    <property type="match status" value="1"/>
</dbReference>
<dbReference type="CDD" id="cd05398">
    <property type="entry name" value="NT_ClassII-CCAase"/>
    <property type="match status" value="1"/>
</dbReference>
<dbReference type="FunFam" id="1.10.3090.10:FF:000001">
    <property type="entry name" value="Multifunctional CCA protein"/>
    <property type="match status" value="1"/>
</dbReference>
<dbReference type="FunFam" id="3.30.460.10:FF:000016">
    <property type="entry name" value="Multifunctional CCA protein"/>
    <property type="match status" value="1"/>
</dbReference>
<dbReference type="Gene3D" id="3.30.460.10">
    <property type="entry name" value="Beta Polymerase, domain 2"/>
    <property type="match status" value="1"/>
</dbReference>
<dbReference type="Gene3D" id="1.10.3090.10">
    <property type="entry name" value="cca-adding enzyme, domain 2"/>
    <property type="match status" value="1"/>
</dbReference>
<dbReference type="HAMAP" id="MF_01261">
    <property type="entry name" value="CCA_bact_type1"/>
    <property type="match status" value="1"/>
</dbReference>
<dbReference type="HAMAP" id="MF_01262">
    <property type="entry name" value="CCA_bact_type2"/>
    <property type="match status" value="1"/>
</dbReference>
<dbReference type="InterPro" id="IPR012006">
    <property type="entry name" value="CCA_bact"/>
</dbReference>
<dbReference type="InterPro" id="IPR003607">
    <property type="entry name" value="HD/PDEase_dom"/>
</dbReference>
<dbReference type="InterPro" id="IPR006674">
    <property type="entry name" value="HD_domain"/>
</dbReference>
<dbReference type="InterPro" id="IPR043519">
    <property type="entry name" value="NT_sf"/>
</dbReference>
<dbReference type="InterPro" id="IPR002646">
    <property type="entry name" value="PolA_pol_head_dom"/>
</dbReference>
<dbReference type="InterPro" id="IPR032828">
    <property type="entry name" value="PolyA_RNA-bd"/>
</dbReference>
<dbReference type="InterPro" id="IPR050124">
    <property type="entry name" value="tRNA_CCA-adding_enzyme"/>
</dbReference>
<dbReference type="NCBIfam" id="NF008137">
    <property type="entry name" value="PRK10885.1"/>
    <property type="match status" value="1"/>
</dbReference>
<dbReference type="PANTHER" id="PTHR47545">
    <property type="entry name" value="MULTIFUNCTIONAL CCA PROTEIN"/>
    <property type="match status" value="1"/>
</dbReference>
<dbReference type="PANTHER" id="PTHR47545:SF1">
    <property type="entry name" value="MULTIFUNCTIONAL CCA PROTEIN"/>
    <property type="match status" value="1"/>
</dbReference>
<dbReference type="Pfam" id="PF01966">
    <property type="entry name" value="HD"/>
    <property type="match status" value="1"/>
</dbReference>
<dbReference type="Pfam" id="PF01743">
    <property type="entry name" value="PolyA_pol"/>
    <property type="match status" value="1"/>
</dbReference>
<dbReference type="Pfam" id="PF12627">
    <property type="entry name" value="PolyA_pol_RNAbd"/>
    <property type="match status" value="1"/>
</dbReference>
<dbReference type="PIRSF" id="PIRSF000813">
    <property type="entry name" value="CCA_bact"/>
    <property type="match status" value="1"/>
</dbReference>
<dbReference type="SUPFAM" id="SSF81301">
    <property type="entry name" value="Nucleotidyltransferase"/>
    <property type="match status" value="1"/>
</dbReference>
<dbReference type="SUPFAM" id="SSF81891">
    <property type="entry name" value="Poly A polymerase C-terminal region-like"/>
    <property type="match status" value="1"/>
</dbReference>
<dbReference type="PROSITE" id="PS51831">
    <property type="entry name" value="HD"/>
    <property type="match status" value="1"/>
</dbReference>
<accession>B1IRR0</accession>
<reference key="1">
    <citation type="submission" date="2008-02" db="EMBL/GenBank/DDBJ databases">
        <title>Complete sequence of Escherichia coli C str. ATCC 8739.</title>
        <authorList>
            <person name="Copeland A."/>
            <person name="Lucas S."/>
            <person name="Lapidus A."/>
            <person name="Glavina del Rio T."/>
            <person name="Dalin E."/>
            <person name="Tice H."/>
            <person name="Bruce D."/>
            <person name="Goodwin L."/>
            <person name="Pitluck S."/>
            <person name="Kiss H."/>
            <person name="Brettin T."/>
            <person name="Detter J.C."/>
            <person name="Han C."/>
            <person name="Kuske C.R."/>
            <person name="Schmutz J."/>
            <person name="Larimer F."/>
            <person name="Land M."/>
            <person name="Hauser L."/>
            <person name="Kyrpides N."/>
            <person name="Mikhailova N."/>
            <person name="Ingram L."/>
            <person name="Richardson P."/>
        </authorList>
    </citation>
    <scope>NUCLEOTIDE SEQUENCE [LARGE SCALE GENOMIC DNA]</scope>
    <source>
        <strain>ATCC 8739 / DSM 1576 / NBRC 3972 / NCIMB 8545 / WDCM 00012 / Crooks</strain>
    </source>
</reference>
<organism>
    <name type="scientific">Escherichia coli (strain ATCC 8739 / DSM 1576 / NBRC 3972 / NCIMB 8545 / WDCM 00012 / Crooks)</name>
    <dbReference type="NCBI Taxonomy" id="481805"/>
    <lineage>
        <taxon>Bacteria</taxon>
        <taxon>Pseudomonadati</taxon>
        <taxon>Pseudomonadota</taxon>
        <taxon>Gammaproteobacteria</taxon>
        <taxon>Enterobacterales</taxon>
        <taxon>Enterobacteriaceae</taxon>
        <taxon>Escherichia</taxon>
    </lineage>
</organism>
<sequence>MKIYLVGGAVRDALLGLPVKDRDWVVVGSTPQEMLDAGYQQVGRDFPVFLHPQTHEEYALARTERKSGSGYTGFTCYAAPDVTLEDDLKRRDLTINALAQDDNGEIIDPYNGLGDLQNRLLRHVSPAFGEDPLRVLRVARFAARYAHLGFRIADETLALMREMTHAGELEHLTPERVWKETESALTTRNPQVFFQVLRDCGALRVLFPEIDALFGVPAPAKWHPEIDTGIHTLMTLSMAAMLSPQVDVRFATLCHDLGKGLTPPELWPRHHGHGPAGVKLVEQLCQRLRVPNEIRDLARLVAEFHDLIHTFPMLNPKTIVKLFDSIDAWRKPQRVEQLALTSEADVRGRTGFESADYPQGRWLREAWEVAQSVPTKAVVEAGFKGVEIREELTRRRIAAVASWKEQRCPKPE</sequence>
<protein>
    <recommendedName>
        <fullName evidence="1">Multifunctional CCA protein</fullName>
    </recommendedName>
    <domain>
        <recommendedName>
            <fullName evidence="1">CCA-adding enzyme</fullName>
            <ecNumber evidence="1">2.7.7.72</ecNumber>
        </recommendedName>
        <alternativeName>
            <fullName evidence="1">CCA tRNA nucleotidyltransferase</fullName>
        </alternativeName>
        <alternativeName>
            <fullName evidence="1">tRNA CCA-pyrophosphorylase</fullName>
        </alternativeName>
        <alternativeName>
            <fullName evidence="1">tRNA adenylyl-/cytidylyl-transferase</fullName>
        </alternativeName>
        <alternativeName>
            <fullName evidence="1">tRNA nucleotidyltransferase</fullName>
        </alternativeName>
        <alternativeName>
            <fullName evidence="1">tRNA-NT</fullName>
        </alternativeName>
    </domain>
    <domain>
        <recommendedName>
            <fullName evidence="1">2'-nucleotidase</fullName>
            <ecNumber evidence="1">3.1.3.-</ecNumber>
        </recommendedName>
    </domain>
    <domain>
        <recommendedName>
            <fullName evidence="1">2',3'-cyclic phosphodiesterase</fullName>
            <ecNumber evidence="1">3.1.4.-</ecNumber>
        </recommendedName>
    </domain>
    <domain>
        <recommendedName>
            <fullName evidence="1">Phosphatase</fullName>
            <ecNumber evidence="1">3.1.3.-</ecNumber>
        </recommendedName>
    </domain>
</protein>
<proteinExistence type="inferred from homology"/>
<keyword id="KW-0067">ATP-binding</keyword>
<keyword id="KW-0378">Hydrolase</keyword>
<keyword id="KW-0460">Magnesium</keyword>
<keyword id="KW-0479">Metal-binding</keyword>
<keyword id="KW-0511">Multifunctional enzyme</keyword>
<keyword id="KW-0533">Nickel</keyword>
<keyword id="KW-0547">Nucleotide-binding</keyword>
<keyword id="KW-0548">Nucleotidyltransferase</keyword>
<keyword id="KW-0692">RNA repair</keyword>
<keyword id="KW-0694">RNA-binding</keyword>
<keyword id="KW-0808">Transferase</keyword>
<keyword id="KW-0819">tRNA processing</keyword>
<feature type="chain" id="PRO_1000085811" description="Multifunctional CCA protein">
    <location>
        <begin position="1"/>
        <end position="412"/>
    </location>
</feature>
<feature type="domain" description="HD" evidence="1">
    <location>
        <begin position="228"/>
        <end position="329"/>
    </location>
</feature>
<feature type="binding site" evidence="1">
    <location>
        <position position="8"/>
    </location>
    <ligand>
        <name>ATP</name>
        <dbReference type="ChEBI" id="CHEBI:30616"/>
    </ligand>
</feature>
<feature type="binding site" evidence="1">
    <location>
        <position position="8"/>
    </location>
    <ligand>
        <name>CTP</name>
        <dbReference type="ChEBI" id="CHEBI:37563"/>
    </ligand>
</feature>
<feature type="binding site" evidence="1">
    <location>
        <position position="11"/>
    </location>
    <ligand>
        <name>ATP</name>
        <dbReference type="ChEBI" id="CHEBI:30616"/>
    </ligand>
</feature>
<feature type="binding site" evidence="1">
    <location>
        <position position="11"/>
    </location>
    <ligand>
        <name>CTP</name>
        <dbReference type="ChEBI" id="CHEBI:37563"/>
    </ligand>
</feature>
<feature type="binding site" evidence="1">
    <location>
        <position position="21"/>
    </location>
    <ligand>
        <name>Mg(2+)</name>
        <dbReference type="ChEBI" id="CHEBI:18420"/>
    </ligand>
</feature>
<feature type="binding site" evidence="1">
    <location>
        <position position="23"/>
    </location>
    <ligand>
        <name>Mg(2+)</name>
        <dbReference type="ChEBI" id="CHEBI:18420"/>
    </ligand>
</feature>
<feature type="binding site" evidence="1">
    <location>
        <position position="91"/>
    </location>
    <ligand>
        <name>ATP</name>
        <dbReference type="ChEBI" id="CHEBI:30616"/>
    </ligand>
</feature>
<feature type="binding site" evidence="1">
    <location>
        <position position="91"/>
    </location>
    <ligand>
        <name>CTP</name>
        <dbReference type="ChEBI" id="CHEBI:37563"/>
    </ligand>
</feature>
<feature type="binding site" evidence="1">
    <location>
        <position position="137"/>
    </location>
    <ligand>
        <name>ATP</name>
        <dbReference type="ChEBI" id="CHEBI:30616"/>
    </ligand>
</feature>
<feature type="binding site" evidence="1">
    <location>
        <position position="137"/>
    </location>
    <ligand>
        <name>CTP</name>
        <dbReference type="ChEBI" id="CHEBI:37563"/>
    </ligand>
</feature>
<feature type="binding site" evidence="1">
    <location>
        <position position="140"/>
    </location>
    <ligand>
        <name>ATP</name>
        <dbReference type="ChEBI" id="CHEBI:30616"/>
    </ligand>
</feature>
<feature type="binding site" evidence="1">
    <location>
        <position position="140"/>
    </location>
    <ligand>
        <name>CTP</name>
        <dbReference type="ChEBI" id="CHEBI:37563"/>
    </ligand>
</feature>
<comment type="function">
    <text evidence="1">Catalyzes the addition and repair of the essential 3'-terminal CCA sequence in tRNAs without using a nucleic acid template. Adds these three nucleotides in the order of C, C, and A to the tRNA nucleotide-73, using CTP and ATP as substrates and producing inorganic pyrophosphate. tRNA 3'-terminal CCA addition is required both for tRNA processing and repair. Also involved in tRNA surveillance by mediating tandem CCA addition to generate a CCACCA at the 3' terminus of unstable tRNAs. While stable tRNAs receive only 3'-terminal CCA, unstable tRNAs are marked with CCACCA and rapidly degraded.</text>
</comment>
<comment type="catalytic activity">
    <reaction evidence="1">
        <text>a tRNA precursor + 2 CTP + ATP = a tRNA with a 3' CCA end + 3 diphosphate</text>
        <dbReference type="Rhea" id="RHEA:14433"/>
        <dbReference type="Rhea" id="RHEA-COMP:10465"/>
        <dbReference type="Rhea" id="RHEA-COMP:10468"/>
        <dbReference type="ChEBI" id="CHEBI:30616"/>
        <dbReference type="ChEBI" id="CHEBI:33019"/>
        <dbReference type="ChEBI" id="CHEBI:37563"/>
        <dbReference type="ChEBI" id="CHEBI:74896"/>
        <dbReference type="ChEBI" id="CHEBI:83071"/>
        <dbReference type="EC" id="2.7.7.72"/>
    </reaction>
</comment>
<comment type="catalytic activity">
    <reaction evidence="1">
        <text>a tRNA with a 3' CCA end + 2 CTP + ATP = a tRNA with a 3' CCACCA end + 3 diphosphate</text>
        <dbReference type="Rhea" id="RHEA:76235"/>
        <dbReference type="Rhea" id="RHEA-COMP:10468"/>
        <dbReference type="Rhea" id="RHEA-COMP:18655"/>
        <dbReference type="ChEBI" id="CHEBI:30616"/>
        <dbReference type="ChEBI" id="CHEBI:33019"/>
        <dbReference type="ChEBI" id="CHEBI:37563"/>
        <dbReference type="ChEBI" id="CHEBI:83071"/>
        <dbReference type="ChEBI" id="CHEBI:195187"/>
    </reaction>
    <physiologicalReaction direction="left-to-right" evidence="1">
        <dbReference type="Rhea" id="RHEA:76236"/>
    </physiologicalReaction>
</comment>
<comment type="cofactor">
    <cofactor evidence="1">
        <name>Mg(2+)</name>
        <dbReference type="ChEBI" id="CHEBI:18420"/>
    </cofactor>
    <text evidence="1">Magnesium is required for nucleotidyltransferase activity.</text>
</comment>
<comment type="cofactor">
    <cofactor evidence="1">
        <name>Ni(2+)</name>
        <dbReference type="ChEBI" id="CHEBI:49786"/>
    </cofactor>
    <text evidence="1">Nickel for phosphatase activity.</text>
</comment>
<comment type="subunit">
    <text evidence="1">Monomer. Can also form homodimers and oligomers.</text>
</comment>
<comment type="domain">
    <text evidence="1">Comprises two domains: an N-terminal domain containing the nucleotidyltransferase activity and a C-terminal HD domain associated with both phosphodiesterase and phosphatase activities.</text>
</comment>
<comment type="miscellaneous">
    <text evidence="1">A single active site specifically recognizes both ATP and CTP and is responsible for their addition.</text>
</comment>
<comment type="similarity">
    <text evidence="1">Belongs to the tRNA nucleotidyltransferase/poly(A) polymerase family. Bacterial CCA-adding enzyme type 1 subfamily.</text>
</comment>
<evidence type="ECO:0000255" key="1">
    <source>
        <dbReference type="HAMAP-Rule" id="MF_01261"/>
    </source>
</evidence>
<name>CCA_ECOLC</name>